<dbReference type="EC" id="3.5.99.6" evidence="1"/>
<dbReference type="EMBL" id="CP000934">
    <property type="protein sequence ID" value="ACE83365.1"/>
    <property type="molecule type" value="Genomic_DNA"/>
</dbReference>
<dbReference type="RefSeq" id="WP_012486812.1">
    <property type="nucleotide sequence ID" value="NC_010995.1"/>
</dbReference>
<dbReference type="SMR" id="B3PBV0"/>
<dbReference type="STRING" id="498211.CJA_1164"/>
<dbReference type="KEGG" id="cja:CJA_1164"/>
<dbReference type="eggNOG" id="COG0363">
    <property type="taxonomic scope" value="Bacteria"/>
</dbReference>
<dbReference type="HOGENOM" id="CLU_049611_1_1_6"/>
<dbReference type="OrthoDB" id="9791139at2"/>
<dbReference type="UniPathway" id="UPA00629">
    <property type="reaction ID" value="UER00684"/>
</dbReference>
<dbReference type="Proteomes" id="UP000001036">
    <property type="component" value="Chromosome"/>
</dbReference>
<dbReference type="GO" id="GO:0005737">
    <property type="term" value="C:cytoplasm"/>
    <property type="evidence" value="ECO:0007669"/>
    <property type="project" value="TreeGrafter"/>
</dbReference>
<dbReference type="GO" id="GO:0004342">
    <property type="term" value="F:glucosamine-6-phosphate deaminase activity"/>
    <property type="evidence" value="ECO:0007669"/>
    <property type="project" value="UniProtKB-UniRule"/>
</dbReference>
<dbReference type="GO" id="GO:0042802">
    <property type="term" value="F:identical protein binding"/>
    <property type="evidence" value="ECO:0007669"/>
    <property type="project" value="TreeGrafter"/>
</dbReference>
<dbReference type="GO" id="GO:0005975">
    <property type="term" value="P:carbohydrate metabolic process"/>
    <property type="evidence" value="ECO:0007669"/>
    <property type="project" value="InterPro"/>
</dbReference>
<dbReference type="GO" id="GO:0006043">
    <property type="term" value="P:glucosamine catabolic process"/>
    <property type="evidence" value="ECO:0007669"/>
    <property type="project" value="TreeGrafter"/>
</dbReference>
<dbReference type="GO" id="GO:0006046">
    <property type="term" value="P:N-acetylglucosamine catabolic process"/>
    <property type="evidence" value="ECO:0007669"/>
    <property type="project" value="TreeGrafter"/>
</dbReference>
<dbReference type="GO" id="GO:0019262">
    <property type="term" value="P:N-acetylneuraminate catabolic process"/>
    <property type="evidence" value="ECO:0007669"/>
    <property type="project" value="UniProtKB-UniRule"/>
</dbReference>
<dbReference type="CDD" id="cd01399">
    <property type="entry name" value="GlcN6P_deaminase"/>
    <property type="match status" value="1"/>
</dbReference>
<dbReference type="FunFam" id="3.40.50.1360:FF:000003">
    <property type="entry name" value="Glucosamine-6-phosphate deaminase"/>
    <property type="match status" value="1"/>
</dbReference>
<dbReference type="Gene3D" id="3.40.50.1360">
    <property type="match status" value="1"/>
</dbReference>
<dbReference type="HAMAP" id="MF_01241">
    <property type="entry name" value="GlcN6P_deamin"/>
    <property type="match status" value="1"/>
</dbReference>
<dbReference type="InterPro" id="IPR006148">
    <property type="entry name" value="Glc/Gal-6P_isomerase"/>
</dbReference>
<dbReference type="InterPro" id="IPR004547">
    <property type="entry name" value="Glucosamine6P_isomerase"/>
</dbReference>
<dbReference type="InterPro" id="IPR018321">
    <property type="entry name" value="Glucosamine6P_isomerase_CS"/>
</dbReference>
<dbReference type="InterPro" id="IPR037171">
    <property type="entry name" value="NagB/RpiA_transferase-like"/>
</dbReference>
<dbReference type="NCBIfam" id="TIGR00502">
    <property type="entry name" value="nagB"/>
    <property type="match status" value="1"/>
</dbReference>
<dbReference type="NCBIfam" id="NF001684">
    <property type="entry name" value="PRK00443.1-4"/>
    <property type="match status" value="1"/>
</dbReference>
<dbReference type="PANTHER" id="PTHR11280">
    <property type="entry name" value="GLUCOSAMINE-6-PHOSPHATE ISOMERASE"/>
    <property type="match status" value="1"/>
</dbReference>
<dbReference type="PANTHER" id="PTHR11280:SF5">
    <property type="entry name" value="GLUCOSAMINE-6-PHOSPHATE ISOMERASE"/>
    <property type="match status" value="1"/>
</dbReference>
<dbReference type="Pfam" id="PF01182">
    <property type="entry name" value="Glucosamine_iso"/>
    <property type="match status" value="1"/>
</dbReference>
<dbReference type="SUPFAM" id="SSF100950">
    <property type="entry name" value="NagB/RpiA/CoA transferase-like"/>
    <property type="match status" value="1"/>
</dbReference>
<dbReference type="PROSITE" id="PS01161">
    <property type="entry name" value="GLC_GALNAC_ISOMERASE"/>
    <property type="match status" value="1"/>
</dbReference>
<gene>
    <name evidence="1" type="primary">nagB</name>
    <name type="ordered locus">CJA_1164</name>
</gene>
<name>NAGB_CELJU</name>
<accession>B3PBV0</accession>
<feature type="chain" id="PRO_1000139762" description="Glucosamine-6-phosphate deaminase">
    <location>
        <begin position="1"/>
        <end position="263"/>
    </location>
</feature>
<feature type="active site" description="Proton acceptor; for enolization step" evidence="1">
    <location>
        <position position="67"/>
    </location>
</feature>
<feature type="active site" description="For ring-opening step" evidence="1">
    <location>
        <position position="136"/>
    </location>
</feature>
<feature type="active site" description="Proton acceptor; for ring-opening step" evidence="1">
    <location>
        <position position="138"/>
    </location>
</feature>
<feature type="active site" description="For ring-opening step" evidence="1">
    <location>
        <position position="143"/>
    </location>
</feature>
<sequence>MKVVILNDAAAVARYGADLFIRQIHKKPDSVLGLATGSTPVALYKELILAYREGRVTFKQVSSFNLDEYLGLDAAHPQSYRYFMNEQLFNHIDIDKAHTLVPPGDAADPIAACALYEKAIAQRGGIDVQLLGIGRNGHIGFNEPSSSLMSRTRVKTLTRATIDDNARFFAPDEYQPHLSITMGIGTILESKKVVLLATGENKADAIKATVEGPLTAACPASALQLHEQAVLIIDEAAASKLSDVEFYKHIERENQKLLDRLGY</sequence>
<evidence type="ECO:0000255" key="1">
    <source>
        <dbReference type="HAMAP-Rule" id="MF_01241"/>
    </source>
</evidence>
<keyword id="KW-0119">Carbohydrate metabolism</keyword>
<keyword id="KW-0378">Hydrolase</keyword>
<keyword id="KW-1185">Reference proteome</keyword>
<reference key="1">
    <citation type="journal article" date="2008" name="J. Bacteriol.">
        <title>Insights into plant cell wall degradation from the genome sequence of the soil bacterium Cellvibrio japonicus.</title>
        <authorList>
            <person name="DeBoy R.T."/>
            <person name="Mongodin E.F."/>
            <person name="Fouts D.E."/>
            <person name="Tailford L.E."/>
            <person name="Khouri H."/>
            <person name="Emerson J.B."/>
            <person name="Mohamoud Y."/>
            <person name="Watkins K."/>
            <person name="Henrissat B."/>
            <person name="Gilbert H.J."/>
            <person name="Nelson K.E."/>
        </authorList>
    </citation>
    <scope>NUCLEOTIDE SEQUENCE [LARGE SCALE GENOMIC DNA]</scope>
    <source>
        <strain>Ueda107</strain>
    </source>
</reference>
<proteinExistence type="inferred from homology"/>
<protein>
    <recommendedName>
        <fullName evidence="1">Glucosamine-6-phosphate deaminase</fullName>
        <ecNumber evidence="1">3.5.99.6</ecNumber>
    </recommendedName>
    <alternativeName>
        <fullName evidence="1">GlcN6P deaminase</fullName>
        <shortName evidence="1">GNPDA</shortName>
    </alternativeName>
    <alternativeName>
        <fullName evidence="1">Glucosamine-6-phosphate isomerase</fullName>
    </alternativeName>
</protein>
<organism>
    <name type="scientific">Cellvibrio japonicus (strain Ueda107)</name>
    <name type="common">Pseudomonas fluorescens subsp. cellulosa</name>
    <dbReference type="NCBI Taxonomy" id="498211"/>
    <lineage>
        <taxon>Bacteria</taxon>
        <taxon>Pseudomonadati</taxon>
        <taxon>Pseudomonadota</taxon>
        <taxon>Gammaproteobacteria</taxon>
        <taxon>Cellvibrionales</taxon>
        <taxon>Cellvibrionaceae</taxon>
        <taxon>Cellvibrio</taxon>
    </lineage>
</organism>
<comment type="function">
    <text evidence="1">Catalyzes the reversible isomerization-deamination of glucosamine 6-phosphate (GlcN6P) to form fructose 6-phosphate (Fru6P) and ammonium ion.</text>
</comment>
<comment type="catalytic activity">
    <reaction evidence="1">
        <text>alpha-D-glucosamine 6-phosphate + H2O = beta-D-fructose 6-phosphate + NH4(+)</text>
        <dbReference type="Rhea" id="RHEA:12172"/>
        <dbReference type="ChEBI" id="CHEBI:15377"/>
        <dbReference type="ChEBI" id="CHEBI:28938"/>
        <dbReference type="ChEBI" id="CHEBI:57634"/>
        <dbReference type="ChEBI" id="CHEBI:75989"/>
        <dbReference type="EC" id="3.5.99.6"/>
    </reaction>
</comment>
<comment type="pathway">
    <text evidence="1">Amino-sugar metabolism; N-acetylneuraminate degradation; D-fructose 6-phosphate from N-acetylneuraminate: step 5/5.</text>
</comment>
<comment type="subunit">
    <text evidence="1">Homohexamer.</text>
</comment>
<comment type="similarity">
    <text evidence="1">Belongs to the glucosamine/galactosamine-6-phosphate isomerase family. NagB subfamily.</text>
</comment>